<feature type="signal peptide" evidence="2">
    <location>
        <begin position="1"/>
        <end position="19"/>
    </location>
</feature>
<feature type="chain" id="PRO_0000324746" description="External core antigen" evidence="2">
    <location>
        <begin position="20"/>
        <end position="218"/>
    </location>
</feature>
<feature type="propeptide" id="PRO_0000324747" evidence="1">
    <location>
        <begin position="190"/>
        <end position="218"/>
    </location>
</feature>
<feature type="repeat" description="1; half-length">
    <location>
        <begin position="190"/>
        <end position="196"/>
    </location>
</feature>
<feature type="repeat" description="2">
    <location>
        <begin position="197"/>
        <end position="204"/>
    </location>
</feature>
<feature type="repeat" description="3">
    <location>
        <begin position="205"/>
        <end position="212"/>
    </location>
</feature>
<feature type="region of interest" description="HBEAG" evidence="2">
    <location>
        <begin position="26"/>
        <end position="28"/>
    </location>
</feature>
<feature type="region of interest" description="Disordered" evidence="3">
    <location>
        <begin position="180"/>
        <end position="218"/>
    </location>
</feature>
<feature type="region of interest" description="3 X 8 AA repeats of S-P-R-R-R-R-S-Q">
    <location>
        <begin position="190"/>
        <end position="212"/>
    </location>
</feature>
<feature type="compositionally biased region" description="Basic residues" evidence="3">
    <location>
        <begin position="180"/>
        <end position="211"/>
    </location>
</feature>
<feature type="site" description="Cleavage; by host" evidence="2">
    <location>
        <begin position="189"/>
        <end position="190"/>
    </location>
</feature>
<feature type="disulfide bond" description="Interchain" evidence="2">
    <location>
        <position position="78"/>
    </location>
</feature>
<feature type="disulfide bond" description="Interchain" evidence="2">
    <location>
        <position position="91"/>
    </location>
</feature>
<evidence type="ECO:0000250" key="1"/>
<evidence type="ECO:0000255" key="2">
    <source>
        <dbReference type="HAMAP-Rule" id="MF_04076"/>
    </source>
</evidence>
<evidence type="ECO:0000256" key="3">
    <source>
        <dbReference type="SAM" id="MobiDB-lite"/>
    </source>
</evidence>
<accession>P0C6J5</accession>
<gene>
    <name evidence="2" type="primary">C</name>
</gene>
<dbReference type="EMBL" id="M18752">
    <property type="status" value="NOT_ANNOTATED_CDS"/>
    <property type="molecule type" value="Genomic_DNA"/>
</dbReference>
<dbReference type="SMR" id="P0C6J5"/>
<dbReference type="Proteomes" id="UP000008598">
    <property type="component" value="Segment"/>
</dbReference>
<dbReference type="GO" id="GO:0005576">
    <property type="term" value="C:extracellular region"/>
    <property type="evidence" value="ECO:0007669"/>
    <property type="project" value="UniProtKB-SubCell"/>
</dbReference>
<dbReference type="GO" id="GO:0043657">
    <property type="term" value="C:host cell"/>
    <property type="evidence" value="ECO:0007669"/>
    <property type="project" value="GOC"/>
</dbReference>
<dbReference type="GO" id="GO:0030430">
    <property type="term" value="C:host cell cytoplasm"/>
    <property type="evidence" value="ECO:0007669"/>
    <property type="project" value="UniProtKB-UniRule"/>
</dbReference>
<dbReference type="GO" id="GO:0042025">
    <property type="term" value="C:host cell nucleus"/>
    <property type="evidence" value="ECO:0007669"/>
    <property type="project" value="UniProtKB-SubCell"/>
</dbReference>
<dbReference type="GO" id="GO:0039619">
    <property type="term" value="C:T=4 icosahedral viral capsid"/>
    <property type="evidence" value="ECO:0007669"/>
    <property type="project" value="UniProtKB-UniRule"/>
</dbReference>
<dbReference type="GO" id="GO:0003677">
    <property type="term" value="F:DNA binding"/>
    <property type="evidence" value="ECO:0007669"/>
    <property type="project" value="UniProtKB-UniRule"/>
</dbReference>
<dbReference type="GO" id="GO:0003723">
    <property type="term" value="F:RNA binding"/>
    <property type="evidence" value="ECO:0007669"/>
    <property type="project" value="UniProtKB-UniRule"/>
</dbReference>
<dbReference type="GO" id="GO:0005198">
    <property type="term" value="F:structural molecule activity"/>
    <property type="evidence" value="ECO:0007669"/>
    <property type="project" value="UniProtKB-UniRule"/>
</dbReference>
<dbReference type="GO" id="GO:0075521">
    <property type="term" value="P:microtubule-dependent intracellular transport of viral material towards nucleus"/>
    <property type="evidence" value="ECO:0007669"/>
    <property type="project" value="UniProtKB-UniRule"/>
</dbReference>
<dbReference type="GO" id="GO:0046718">
    <property type="term" value="P:symbiont entry into host cell"/>
    <property type="evidence" value="ECO:0007669"/>
    <property type="project" value="UniProtKB-UniRule"/>
</dbReference>
<dbReference type="GO" id="GO:0075732">
    <property type="term" value="P:viral penetration into host nucleus"/>
    <property type="evidence" value="ECO:0007669"/>
    <property type="project" value="UniProtKB-UniRule"/>
</dbReference>
<dbReference type="Gene3D" id="1.10.4090.10">
    <property type="entry name" value="Viral capsid, core domain supefamily, Hepatitis B virus"/>
    <property type="match status" value="1"/>
</dbReference>
<dbReference type="HAMAP" id="MF_04076">
    <property type="entry name" value="HBV_HBEAG"/>
    <property type="match status" value="1"/>
</dbReference>
<dbReference type="InterPro" id="IPR013195">
    <property type="entry name" value="Hepatitis_B_virus_capsid_N"/>
</dbReference>
<dbReference type="InterPro" id="IPR002006">
    <property type="entry name" value="Hepatitis_core"/>
</dbReference>
<dbReference type="InterPro" id="IPR036459">
    <property type="entry name" value="Viral_capsid_core_dom_sf_HBV"/>
</dbReference>
<dbReference type="Pfam" id="PF08290">
    <property type="entry name" value="Hep_core_N"/>
    <property type="match status" value="1"/>
</dbReference>
<dbReference type="Pfam" id="PF00906">
    <property type="entry name" value="Hepatitis_core"/>
    <property type="match status" value="3"/>
</dbReference>
<dbReference type="SUPFAM" id="SSF47852">
    <property type="entry name" value="Hepatitis B viral capsid (hbcag)"/>
    <property type="match status" value="1"/>
</dbReference>
<organism>
    <name type="scientific">Woodchuck hepatitis B virus (isolate 7)</name>
    <name type="common">WHV</name>
    <dbReference type="NCBI Taxonomy" id="10432"/>
    <lineage>
        <taxon>Viruses</taxon>
        <taxon>Riboviria</taxon>
        <taxon>Pararnavirae</taxon>
        <taxon>Artverviricota</taxon>
        <taxon>Revtraviricetes</taxon>
        <taxon>Blubervirales</taxon>
        <taxon>Hepadnaviridae</taxon>
        <taxon>Orthohepadnavirus</taxon>
        <taxon>Woodchuck hepatitis virus</taxon>
    </lineage>
</organism>
<sequence>MYLFHLCLVFACVPCPTFQASKLCLGWLWGMDIDPYKEFGSSYQLLNFLPLDFFPDLNALVDTATALYEEELTGREHCSPHHTAIRQALVCWDELTKLIAWMSSNITSEQVRTIIVNHVNDTWGLKVRQSLWFHLSCLTFGQHTVQEFLVSFGVWIRTPAPYRPPNAPILSTLPEHTVIRRRGGARASRSPRRRTPSPRRRRSQSPRRRRSQSPSANC</sequence>
<reference key="1">
    <citation type="journal article" date="1988" name="Virology">
        <title>Sequence comparison of woodchuck hepatitis virus replicative forms shows conservation of the genome.</title>
        <authorList>
            <person name="Cohen J.I."/>
            <person name="Miller R.H."/>
            <person name="Rosenblum B."/>
            <person name="Denniston K."/>
            <person name="Gerin J.L."/>
            <person name="Purcell R.H."/>
        </authorList>
    </citation>
    <scope>NUCLEOTIDE SEQUENCE [GENOMIC DNA]</scope>
</reference>
<proteinExistence type="inferred from homology"/>
<comment type="function">
    <text evidence="2">May regulate immune response to the intracellular capsid in acting as a T-cell tolerogen, by having an immunoregulatory effect which prevents destruction of infected cells by cytotoxic T-cells. This immune regulation may predispose to chronicity during perinatal infections and prevent severe liver injury during adult infections.</text>
</comment>
<comment type="subunit">
    <text evidence="2">Homodimerizes.</text>
</comment>
<comment type="subcellular location">
    <subcellularLocation>
        <location evidence="2">Secreted</location>
    </subcellularLocation>
    <subcellularLocation>
        <location evidence="2">Host nucleus</location>
    </subcellularLocation>
</comment>
<comment type="alternative products">
    <event type="alternative initiation"/>
    <isoform>
        <id>P0C6J5-1</id>
        <name>External core antigen</name>
        <sequence type="displayed"/>
    </isoform>
    <isoform>
        <id>P69710-1</id>
        <name>Capsid protein</name>
        <sequence type="external"/>
    </isoform>
</comment>
<comment type="PTM">
    <text evidence="2">Phosphorylated.</text>
</comment>
<comment type="PTM">
    <text evidence="2">Cleaved by host furin.</text>
</comment>
<comment type="similarity">
    <text evidence="2">Belongs to the orthohepadnavirus precore antigen family.</text>
</comment>
<name>HBEAG_WHV4</name>
<keyword id="KW-0024">Alternative initiation</keyword>
<keyword id="KW-1015">Disulfide bond</keyword>
<keyword id="KW-1048">Host nucleus</keyword>
<keyword id="KW-0945">Host-virus interaction</keyword>
<keyword id="KW-0677">Repeat</keyword>
<keyword id="KW-0964">Secreted</keyword>
<keyword id="KW-0732">Signal</keyword>
<keyword id="KW-0899">Viral immunoevasion</keyword>
<organismHost>
    <name type="scientific">Marmota monax</name>
    <name type="common">Woodchuck</name>
    <dbReference type="NCBI Taxonomy" id="9995"/>
</organismHost>
<protein>
    <recommendedName>
        <fullName evidence="2">External core antigen</fullName>
    </recommendedName>
    <alternativeName>
        <fullName evidence="2">HBeAg</fullName>
    </alternativeName>
    <alternativeName>
        <fullName evidence="2">Precore protein</fullName>
    </alternativeName>
    <alternativeName>
        <fullName evidence="2">p25</fullName>
    </alternativeName>
</protein>